<accession>Q8PFV1</accession>
<keyword id="KW-0012">Acyltransferase</keyword>
<keyword id="KW-0963">Cytoplasm</keyword>
<keyword id="KW-0408">Iron</keyword>
<keyword id="KW-0479">Metal-binding</keyword>
<keyword id="KW-0808">Transferase</keyword>
<keyword id="KW-0819">tRNA processing</keyword>
<gene>
    <name evidence="1" type="primary">tsaD</name>
    <name type="synonym">gcp</name>
    <name type="ordered locus">XAC3871</name>
</gene>
<name>TSAD_XANAC</name>
<sequence>MKVLGIESSCDETGVAVYDTELSGVPALRAHAVYSQIALHAEYGGVVPELASRDHVRKLLPLIRQTLGEAGLRIDELDGVAYTAGPGLVGALLVGAGVARSLAWALDVPAIGVHHMEGHLLAPLMEDDPPQAPFVALLVSGGHTQLVSVKALGSYQVLGETLDDAAGEAFDKTAKMMGLPYPGGPQLAALAETGTPGRYKFARPMTDRPGLDFSFSGLKTQVLLAWRSSDQSDTTRADIARGFEDAVVDTLAIKCLRALDAAGCDTLVVAGGVGANKRLRARLQEAAQRRGGRVCFPRPALCTDNGAMIAFAGALRLQAGEHADAAVHVTPRWDMAALPPLAAQESGVGNRE</sequence>
<feature type="chain" id="PRO_0000303615" description="tRNA N6-adenosine threonylcarbamoyltransferase">
    <location>
        <begin position="1"/>
        <end position="352"/>
    </location>
</feature>
<feature type="binding site" evidence="1">
    <location>
        <position position="115"/>
    </location>
    <ligand>
        <name>Fe cation</name>
        <dbReference type="ChEBI" id="CHEBI:24875"/>
    </ligand>
</feature>
<feature type="binding site" evidence="1">
    <location>
        <position position="119"/>
    </location>
    <ligand>
        <name>Fe cation</name>
        <dbReference type="ChEBI" id="CHEBI:24875"/>
    </ligand>
</feature>
<feature type="binding site" evidence="1">
    <location>
        <begin position="138"/>
        <end position="142"/>
    </location>
    <ligand>
        <name>substrate</name>
    </ligand>
</feature>
<feature type="binding site" evidence="1">
    <location>
        <position position="171"/>
    </location>
    <ligand>
        <name>substrate</name>
    </ligand>
</feature>
<feature type="binding site" evidence="1">
    <location>
        <position position="184"/>
    </location>
    <ligand>
        <name>substrate</name>
    </ligand>
</feature>
<feature type="binding site" evidence="1">
    <location>
        <position position="276"/>
    </location>
    <ligand>
        <name>substrate</name>
    </ligand>
</feature>
<feature type="binding site" evidence="1">
    <location>
        <position position="304"/>
    </location>
    <ligand>
        <name>Fe cation</name>
        <dbReference type="ChEBI" id="CHEBI:24875"/>
    </ligand>
</feature>
<evidence type="ECO:0000255" key="1">
    <source>
        <dbReference type="HAMAP-Rule" id="MF_01445"/>
    </source>
</evidence>
<reference key="1">
    <citation type="journal article" date="2002" name="Nature">
        <title>Comparison of the genomes of two Xanthomonas pathogens with differing host specificities.</title>
        <authorList>
            <person name="da Silva A.C.R."/>
            <person name="Ferro J.A."/>
            <person name="Reinach F.C."/>
            <person name="Farah C.S."/>
            <person name="Furlan L.R."/>
            <person name="Quaggio R.B."/>
            <person name="Monteiro-Vitorello C.B."/>
            <person name="Van Sluys M.A."/>
            <person name="Almeida N.F. Jr."/>
            <person name="Alves L.M.C."/>
            <person name="do Amaral A.M."/>
            <person name="Bertolini M.C."/>
            <person name="Camargo L.E.A."/>
            <person name="Camarotte G."/>
            <person name="Cannavan F."/>
            <person name="Cardozo J."/>
            <person name="Chambergo F."/>
            <person name="Ciapina L.P."/>
            <person name="Cicarelli R.M.B."/>
            <person name="Coutinho L.L."/>
            <person name="Cursino-Santos J.R."/>
            <person name="El-Dorry H."/>
            <person name="Faria J.B."/>
            <person name="Ferreira A.J.S."/>
            <person name="Ferreira R.C.C."/>
            <person name="Ferro M.I.T."/>
            <person name="Formighieri E.F."/>
            <person name="Franco M.C."/>
            <person name="Greggio C.C."/>
            <person name="Gruber A."/>
            <person name="Katsuyama A.M."/>
            <person name="Kishi L.T."/>
            <person name="Leite R.P."/>
            <person name="Lemos E.G.M."/>
            <person name="Lemos M.V.F."/>
            <person name="Locali E.C."/>
            <person name="Machado M.A."/>
            <person name="Madeira A.M.B.N."/>
            <person name="Martinez-Rossi N.M."/>
            <person name="Martins E.C."/>
            <person name="Meidanis J."/>
            <person name="Menck C.F.M."/>
            <person name="Miyaki C.Y."/>
            <person name="Moon D.H."/>
            <person name="Moreira L.M."/>
            <person name="Novo M.T.M."/>
            <person name="Okura V.K."/>
            <person name="Oliveira M.C."/>
            <person name="Oliveira V.R."/>
            <person name="Pereira H.A."/>
            <person name="Rossi A."/>
            <person name="Sena J.A.D."/>
            <person name="Silva C."/>
            <person name="de Souza R.F."/>
            <person name="Spinola L.A.F."/>
            <person name="Takita M.A."/>
            <person name="Tamura R.E."/>
            <person name="Teixeira E.C."/>
            <person name="Tezza R.I.D."/>
            <person name="Trindade dos Santos M."/>
            <person name="Truffi D."/>
            <person name="Tsai S.M."/>
            <person name="White F.F."/>
            <person name="Setubal J.C."/>
            <person name="Kitajima J.P."/>
        </authorList>
    </citation>
    <scope>NUCLEOTIDE SEQUENCE [LARGE SCALE GENOMIC DNA]</scope>
    <source>
        <strain>306</strain>
    </source>
</reference>
<organism>
    <name type="scientific">Xanthomonas axonopodis pv. citri (strain 306)</name>
    <dbReference type="NCBI Taxonomy" id="190486"/>
    <lineage>
        <taxon>Bacteria</taxon>
        <taxon>Pseudomonadati</taxon>
        <taxon>Pseudomonadota</taxon>
        <taxon>Gammaproteobacteria</taxon>
        <taxon>Lysobacterales</taxon>
        <taxon>Lysobacteraceae</taxon>
        <taxon>Xanthomonas</taxon>
    </lineage>
</organism>
<protein>
    <recommendedName>
        <fullName evidence="1">tRNA N6-adenosine threonylcarbamoyltransferase</fullName>
        <ecNumber evidence="1">2.3.1.234</ecNumber>
    </recommendedName>
    <alternativeName>
        <fullName evidence="1">N6-L-threonylcarbamoyladenine synthase</fullName>
        <shortName evidence="1">t(6)A synthase</shortName>
    </alternativeName>
    <alternativeName>
        <fullName evidence="1">t(6)A37 threonylcarbamoyladenosine biosynthesis protein TsaD</fullName>
    </alternativeName>
    <alternativeName>
        <fullName evidence="1">tRNA threonylcarbamoyladenosine biosynthesis protein TsaD</fullName>
    </alternativeName>
</protein>
<dbReference type="EC" id="2.3.1.234" evidence="1"/>
<dbReference type="EMBL" id="AE008923">
    <property type="protein sequence ID" value="AAM38713.1"/>
    <property type="molecule type" value="Genomic_DNA"/>
</dbReference>
<dbReference type="RefSeq" id="WP_003484605.1">
    <property type="nucleotide sequence ID" value="NC_003919.1"/>
</dbReference>
<dbReference type="SMR" id="Q8PFV1"/>
<dbReference type="GeneID" id="66912892"/>
<dbReference type="KEGG" id="xac:XAC3871"/>
<dbReference type="eggNOG" id="COG0533">
    <property type="taxonomic scope" value="Bacteria"/>
</dbReference>
<dbReference type="HOGENOM" id="CLU_023208_0_2_6"/>
<dbReference type="Proteomes" id="UP000000576">
    <property type="component" value="Chromosome"/>
</dbReference>
<dbReference type="GO" id="GO:0005737">
    <property type="term" value="C:cytoplasm"/>
    <property type="evidence" value="ECO:0007669"/>
    <property type="project" value="UniProtKB-SubCell"/>
</dbReference>
<dbReference type="GO" id="GO:0005506">
    <property type="term" value="F:iron ion binding"/>
    <property type="evidence" value="ECO:0007669"/>
    <property type="project" value="UniProtKB-UniRule"/>
</dbReference>
<dbReference type="GO" id="GO:0061711">
    <property type="term" value="F:N(6)-L-threonylcarbamoyladenine synthase activity"/>
    <property type="evidence" value="ECO:0007669"/>
    <property type="project" value="UniProtKB-EC"/>
</dbReference>
<dbReference type="GO" id="GO:0002949">
    <property type="term" value="P:tRNA threonylcarbamoyladenosine modification"/>
    <property type="evidence" value="ECO:0007669"/>
    <property type="project" value="UniProtKB-UniRule"/>
</dbReference>
<dbReference type="CDD" id="cd24133">
    <property type="entry name" value="ASKHA_NBD_TsaD_bac"/>
    <property type="match status" value="1"/>
</dbReference>
<dbReference type="FunFam" id="3.30.420.40:FF:000012">
    <property type="entry name" value="tRNA N6-adenosine threonylcarbamoyltransferase"/>
    <property type="match status" value="1"/>
</dbReference>
<dbReference type="FunFam" id="3.30.420.40:FF:000031">
    <property type="entry name" value="tRNA N6-adenosine threonylcarbamoyltransferase"/>
    <property type="match status" value="1"/>
</dbReference>
<dbReference type="Gene3D" id="3.30.420.40">
    <property type="match status" value="2"/>
</dbReference>
<dbReference type="HAMAP" id="MF_01445">
    <property type="entry name" value="TsaD"/>
    <property type="match status" value="1"/>
</dbReference>
<dbReference type="InterPro" id="IPR043129">
    <property type="entry name" value="ATPase_NBD"/>
</dbReference>
<dbReference type="InterPro" id="IPR000905">
    <property type="entry name" value="Gcp-like_dom"/>
</dbReference>
<dbReference type="InterPro" id="IPR017861">
    <property type="entry name" value="KAE1/TsaD"/>
</dbReference>
<dbReference type="InterPro" id="IPR017860">
    <property type="entry name" value="Peptidase_M22_CS"/>
</dbReference>
<dbReference type="InterPro" id="IPR022450">
    <property type="entry name" value="TsaD"/>
</dbReference>
<dbReference type="NCBIfam" id="TIGR00329">
    <property type="entry name" value="gcp_kae1"/>
    <property type="match status" value="1"/>
</dbReference>
<dbReference type="NCBIfam" id="TIGR03723">
    <property type="entry name" value="T6A_TsaD_YgjD"/>
    <property type="match status" value="1"/>
</dbReference>
<dbReference type="PANTHER" id="PTHR11735">
    <property type="entry name" value="TRNA N6-ADENOSINE THREONYLCARBAMOYLTRANSFERASE"/>
    <property type="match status" value="1"/>
</dbReference>
<dbReference type="PANTHER" id="PTHR11735:SF6">
    <property type="entry name" value="TRNA N6-ADENOSINE THREONYLCARBAMOYLTRANSFERASE, MITOCHONDRIAL"/>
    <property type="match status" value="1"/>
</dbReference>
<dbReference type="Pfam" id="PF00814">
    <property type="entry name" value="TsaD"/>
    <property type="match status" value="1"/>
</dbReference>
<dbReference type="PRINTS" id="PR00789">
    <property type="entry name" value="OSIALOPTASE"/>
</dbReference>
<dbReference type="SUPFAM" id="SSF53067">
    <property type="entry name" value="Actin-like ATPase domain"/>
    <property type="match status" value="2"/>
</dbReference>
<dbReference type="PROSITE" id="PS01016">
    <property type="entry name" value="GLYCOPROTEASE"/>
    <property type="match status" value="1"/>
</dbReference>
<proteinExistence type="inferred from homology"/>
<comment type="function">
    <text evidence="1">Required for the formation of a threonylcarbamoyl group on adenosine at position 37 (t(6)A37) in tRNAs that read codons beginning with adenine. Is involved in the transfer of the threonylcarbamoyl moiety of threonylcarbamoyl-AMP (TC-AMP) to the N6 group of A37, together with TsaE and TsaB. TsaD likely plays a direct catalytic role in this reaction.</text>
</comment>
<comment type="catalytic activity">
    <reaction evidence="1">
        <text>L-threonylcarbamoyladenylate + adenosine(37) in tRNA = N(6)-L-threonylcarbamoyladenosine(37) in tRNA + AMP + H(+)</text>
        <dbReference type="Rhea" id="RHEA:37059"/>
        <dbReference type="Rhea" id="RHEA-COMP:10162"/>
        <dbReference type="Rhea" id="RHEA-COMP:10163"/>
        <dbReference type="ChEBI" id="CHEBI:15378"/>
        <dbReference type="ChEBI" id="CHEBI:73682"/>
        <dbReference type="ChEBI" id="CHEBI:74411"/>
        <dbReference type="ChEBI" id="CHEBI:74418"/>
        <dbReference type="ChEBI" id="CHEBI:456215"/>
        <dbReference type="EC" id="2.3.1.234"/>
    </reaction>
</comment>
<comment type="cofactor">
    <cofactor evidence="1">
        <name>Fe(2+)</name>
        <dbReference type="ChEBI" id="CHEBI:29033"/>
    </cofactor>
    <text evidence="1">Binds 1 Fe(2+) ion per subunit.</text>
</comment>
<comment type="subcellular location">
    <subcellularLocation>
        <location evidence="1">Cytoplasm</location>
    </subcellularLocation>
</comment>
<comment type="similarity">
    <text evidence="1">Belongs to the KAE1 / TsaD family.</text>
</comment>